<name>MNMC_CAMJ8</name>
<comment type="function">
    <text evidence="1">Catalyzes the last two steps in the biosynthesis of 5-methylaminomethyl-2-thiouridine (mnm(5)s(2)U) at the wobble position (U34) in tRNA. Catalyzes the FAD-dependent demodification of cmnm(5)s(2)U34 to nm(5)s(2)U34, followed by the transfer of a methyl group from S-adenosyl-L-methionine to nm(5)s(2)U34, to form mnm(5)s(2)U34.</text>
</comment>
<comment type="catalytic activity">
    <reaction evidence="1">
        <text>5-aminomethyl-2-thiouridine(34) in tRNA + S-adenosyl-L-methionine = 5-methylaminomethyl-2-thiouridine(34) in tRNA + S-adenosyl-L-homocysteine + H(+)</text>
        <dbReference type="Rhea" id="RHEA:19569"/>
        <dbReference type="Rhea" id="RHEA-COMP:10195"/>
        <dbReference type="Rhea" id="RHEA-COMP:10197"/>
        <dbReference type="ChEBI" id="CHEBI:15378"/>
        <dbReference type="ChEBI" id="CHEBI:57856"/>
        <dbReference type="ChEBI" id="CHEBI:59789"/>
        <dbReference type="ChEBI" id="CHEBI:74454"/>
        <dbReference type="ChEBI" id="CHEBI:74455"/>
        <dbReference type="EC" id="2.1.1.61"/>
    </reaction>
</comment>
<comment type="cofactor">
    <cofactor evidence="1">
        <name>FAD</name>
        <dbReference type="ChEBI" id="CHEBI:57692"/>
    </cofactor>
</comment>
<comment type="subcellular location">
    <subcellularLocation>
        <location evidence="1">Cytoplasm</location>
    </subcellularLocation>
</comment>
<comment type="similarity">
    <text evidence="1">In the N-terminal section; belongs to the methyltransferase superfamily. tRNA (mnm(5)s(2)U34)-methyltransferase family.</text>
</comment>
<comment type="similarity">
    <text evidence="1">In the C-terminal section; belongs to the DAO family.</text>
</comment>
<evidence type="ECO:0000255" key="1">
    <source>
        <dbReference type="HAMAP-Rule" id="MF_01102"/>
    </source>
</evidence>
<accession>A8FMX4</accession>
<dbReference type="EC" id="2.1.1.61" evidence="1"/>
<dbReference type="EC" id="1.5.-.-" evidence="1"/>
<dbReference type="EMBL" id="CP000814">
    <property type="protein sequence ID" value="ABV52811.1"/>
    <property type="molecule type" value="Genomic_DNA"/>
</dbReference>
<dbReference type="RefSeq" id="WP_002876765.1">
    <property type="nucleotide sequence ID" value="NC_009839.1"/>
</dbReference>
<dbReference type="SMR" id="A8FMX4"/>
<dbReference type="KEGG" id="cju:C8J_1212"/>
<dbReference type="HOGENOM" id="CLU_022427_2_1_7"/>
<dbReference type="GO" id="GO:0005737">
    <property type="term" value="C:cytoplasm"/>
    <property type="evidence" value="ECO:0007669"/>
    <property type="project" value="UniProtKB-SubCell"/>
</dbReference>
<dbReference type="GO" id="GO:0016645">
    <property type="term" value="F:oxidoreductase activity, acting on the CH-NH group of donors"/>
    <property type="evidence" value="ECO:0007669"/>
    <property type="project" value="InterPro"/>
</dbReference>
<dbReference type="GO" id="GO:0004808">
    <property type="term" value="F:tRNA (5-methylaminomethyl-2-thiouridylate)(34)-methyltransferase activity"/>
    <property type="evidence" value="ECO:0007669"/>
    <property type="project" value="UniProtKB-EC"/>
</dbReference>
<dbReference type="GO" id="GO:0032259">
    <property type="term" value="P:methylation"/>
    <property type="evidence" value="ECO:0007669"/>
    <property type="project" value="UniProtKB-KW"/>
</dbReference>
<dbReference type="GO" id="GO:0008033">
    <property type="term" value="P:tRNA processing"/>
    <property type="evidence" value="ECO:0007669"/>
    <property type="project" value="UniProtKB-KW"/>
</dbReference>
<dbReference type="Gene3D" id="3.30.9.10">
    <property type="entry name" value="D-Amino Acid Oxidase, subunit A, domain 2"/>
    <property type="match status" value="1"/>
</dbReference>
<dbReference type="Gene3D" id="3.50.50.60">
    <property type="entry name" value="FAD/NAD(P)-binding domain"/>
    <property type="match status" value="1"/>
</dbReference>
<dbReference type="Gene3D" id="3.40.50.150">
    <property type="entry name" value="Vaccinia Virus protein VP39"/>
    <property type="match status" value="1"/>
</dbReference>
<dbReference type="HAMAP" id="MF_01102">
    <property type="entry name" value="MnmC"/>
    <property type="match status" value="1"/>
</dbReference>
<dbReference type="InterPro" id="IPR006076">
    <property type="entry name" value="FAD-dep_OxRdtase"/>
</dbReference>
<dbReference type="InterPro" id="IPR036188">
    <property type="entry name" value="FAD/NAD-bd_sf"/>
</dbReference>
<dbReference type="InterPro" id="IPR008471">
    <property type="entry name" value="MnmC-like_methylTransf"/>
</dbReference>
<dbReference type="InterPro" id="IPR029063">
    <property type="entry name" value="SAM-dependent_MTases_sf"/>
</dbReference>
<dbReference type="InterPro" id="IPR023032">
    <property type="entry name" value="tRNA_MAMT_biosynth_bifunc_MnmC"/>
</dbReference>
<dbReference type="InterPro" id="IPR047785">
    <property type="entry name" value="tRNA_MNMC2"/>
</dbReference>
<dbReference type="InterPro" id="IPR017610">
    <property type="entry name" value="tRNA_S-uridine_synth_MnmC_C"/>
</dbReference>
<dbReference type="NCBIfam" id="TIGR03197">
    <property type="entry name" value="MnmC_Cterm"/>
    <property type="match status" value="1"/>
</dbReference>
<dbReference type="NCBIfam" id="NF002481">
    <property type="entry name" value="PRK01747.1-2"/>
    <property type="match status" value="1"/>
</dbReference>
<dbReference type="NCBIfam" id="NF033855">
    <property type="entry name" value="tRNA_MNMC2"/>
    <property type="match status" value="1"/>
</dbReference>
<dbReference type="PANTHER" id="PTHR13847">
    <property type="entry name" value="SARCOSINE DEHYDROGENASE-RELATED"/>
    <property type="match status" value="1"/>
</dbReference>
<dbReference type="PANTHER" id="PTHR13847:SF283">
    <property type="entry name" value="TRNA 5-METHYLAMINOMETHYL-2-THIOURIDINE BIOSYNTHESIS BIFUNCTIONAL PROTEIN MNMC"/>
    <property type="match status" value="1"/>
</dbReference>
<dbReference type="Pfam" id="PF01266">
    <property type="entry name" value="DAO"/>
    <property type="match status" value="1"/>
</dbReference>
<dbReference type="Pfam" id="PF05430">
    <property type="entry name" value="Methyltransf_30"/>
    <property type="match status" value="1"/>
</dbReference>
<dbReference type="SUPFAM" id="SSF51905">
    <property type="entry name" value="FAD/NAD(P)-binding domain"/>
    <property type="match status" value="1"/>
</dbReference>
<protein>
    <recommendedName>
        <fullName evidence="1">tRNA 5-methylaminomethyl-2-thiouridine biosynthesis bifunctional protein MnmC</fullName>
        <shortName evidence="1">tRNA mnm(5)s(2)U biosynthesis bifunctional protein</shortName>
    </recommendedName>
    <domain>
        <recommendedName>
            <fullName evidence="1">tRNA (mnm(5)s(2)U34)-methyltransferase</fullName>
            <ecNumber evidence="1">2.1.1.61</ecNumber>
        </recommendedName>
    </domain>
    <domain>
        <recommendedName>
            <fullName evidence="1">FAD-dependent cmnm(5)s(2)U34 oxidoreductase</fullName>
            <ecNumber evidence="1">1.5.-.-</ecNumber>
        </recommendedName>
    </domain>
</protein>
<organism>
    <name type="scientific">Campylobacter jejuni subsp. jejuni serotype O:6 (strain 81116 / NCTC 11828)</name>
    <dbReference type="NCBI Taxonomy" id="407148"/>
    <lineage>
        <taxon>Bacteria</taxon>
        <taxon>Pseudomonadati</taxon>
        <taxon>Campylobacterota</taxon>
        <taxon>Epsilonproteobacteria</taxon>
        <taxon>Campylobacterales</taxon>
        <taxon>Campylobacteraceae</taxon>
        <taxon>Campylobacter</taxon>
    </lineage>
</organism>
<sequence length="613" mass="71714">MKKAKLIFKDNTPFSLDFDDFYFNSKDGLNESKFVYTHSFEWKNQENFIIAESGFGIGLNFFLTLKRFLQTTPSKRPKKLFYISIEAFYIEKEQLREIYQKLGFYEEFKELLEQFLKFYPKAKEGIYRFYFEDCFLDLVFEDITILKELDFKADIWYLDGFSPNKNSQMFDENLIFEVARLSKKNTQICTFSSASFLQKNLKKYGFRVEKTKGFRKREMIKAYLENELEFKDKEAYFSRTFSSLKNKKVAIIGAGISSAVLAYELSLRGFEIDVFEKHLELGKGASGNESGILSSLILKPKVNLGEFSELSFIEASRFYRQILDLEFKGVVEFAHNDLMQERFDTQRENVLFKISKNQAFLEEGGVIFPKNLVKNLFEKSKACIYFNHEFQAYKFENECFTLKFKNDIVKSDYAVLIYAMGADTKDFVFYDEMKLSKVRGQVTHLKPFLNTPFPLSSKAYICPVKDDLQVIGASYDRLDASLESKEEDDKQNIENIAEFIDKNTKLEIIGSKVGFRSYSSDRFMIVGNAYDEVFYKEEYKALLWTKNKEQKLAKISCNLYFNFAHGSRGFSTSVLAARYLCALINNEPLYLEKKYIHAIHPARFLIRKLKKGL</sequence>
<feature type="chain" id="PRO_0000347973" description="tRNA 5-methylaminomethyl-2-thiouridine biosynthesis bifunctional protein MnmC">
    <location>
        <begin position="1"/>
        <end position="613"/>
    </location>
</feature>
<feature type="region of interest" description="tRNA (mnm(5)s(2)U34)-methyltransferase">
    <location>
        <begin position="1"/>
        <end position="225"/>
    </location>
</feature>
<feature type="region of interest" description="FAD-dependent cmnm(5)s(2)U34 oxidoreductase">
    <location>
        <begin position="252"/>
        <end position="613"/>
    </location>
</feature>
<reference key="1">
    <citation type="journal article" date="2007" name="J. Bacteriol.">
        <title>The complete genome sequence of Campylobacter jejuni strain 81116 (NCTC11828).</title>
        <authorList>
            <person name="Pearson B.M."/>
            <person name="Gaskin D.J.H."/>
            <person name="Segers R.P.A.M."/>
            <person name="Wells J.M."/>
            <person name="Nuijten P.J.M."/>
            <person name="van Vliet A.H.M."/>
        </authorList>
    </citation>
    <scope>NUCLEOTIDE SEQUENCE [LARGE SCALE GENOMIC DNA]</scope>
    <source>
        <strain>81116 / NCTC 11828</strain>
    </source>
</reference>
<gene>
    <name evidence="1" type="primary">mnmC</name>
    <name type="ordered locus">C8J_1212</name>
</gene>
<proteinExistence type="inferred from homology"/>
<keyword id="KW-0963">Cytoplasm</keyword>
<keyword id="KW-0274">FAD</keyword>
<keyword id="KW-0285">Flavoprotein</keyword>
<keyword id="KW-0489">Methyltransferase</keyword>
<keyword id="KW-0511">Multifunctional enzyme</keyword>
<keyword id="KW-0560">Oxidoreductase</keyword>
<keyword id="KW-0949">S-adenosyl-L-methionine</keyword>
<keyword id="KW-0808">Transferase</keyword>
<keyword id="KW-0819">tRNA processing</keyword>